<protein>
    <recommendedName>
        <fullName evidence="1">Ribosomal RNA large subunit methyltransferase I</fullName>
        <ecNumber evidence="1">2.1.1.191</ecNumber>
    </recommendedName>
    <alternativeName>
        <fullName evidence="1">23S rRNA m5C1962 methyltransferase</fullName>
    </alternativeName>
    <alternativeName>
        <fullName evidence="1">rRNA (cytosine-C(5)-)-methyltransferase RlmI</fullName>
    </alternativeName>
</protein>
<reference key="1">
    <citation type="journal article" date="2001" name="Nature">
        <title>Complete genome sequence of a multiple drug resistant Salmonella enterica serovar Typhi CT18.</title>
        <authorList>
            <person name="Parkhill J."/>
            <person name="Dougan G."/>
            <person name="James K.D."/>
            <person name="Thomson N.R."/>
            <person name="Pickard D."/>
            <person name="Wain J."/>
            <person name="Churcher C.M."/>
            <person name="Mungall K.L."/>
            <person name="Bentley S.D."/>
            <person name="Holden M.T.G."/>
            <person name="Sebaihia M."/>
            <person name="Baker S."/>
            <person name="Basham D."/>
            <person name="Brooks K."/>
            <person name="Chillingworth T."/>
            <person name="Connerton P."/>
            <person name="Cronin A."/>
            <person name="Davis P."/>
            <person name="Davies R.M."/>
            <person name="Dowd L."/>
            <person name="White N."/>
            <person name="Farrar J."/>
            <person name="Feltwell T."/>
            <person name="Hamlin N."/>
            <person name="Haque A."/>
            <person name="Hien T.T."/>
            <person name="Holroyd S."/>
            <person name="Jagels K."/>
            <person name="Krogh A."/>
            <person name="Larsen T.S."/>
            <person name="Leather S."/>
            <person name="Moule S."/>
            <person name="O'Gaora P."/>
            <person name="Parry C."/>
            <person name="Quail M.A."/>
            <person name="Rutherford K.M."/>
            <person name="Simmonds M."/>
            <person name="Skelton J."/>
            <person name="Stevens K."/>
            <person name="Whitehead S."/>
            <person name="Barrell B.G."/>
        </authorList>
    </citation>
    <scope>NUCLEOTIDE SEQUENCE [LARGE SCALE GENOMIC DNA]</scope>
    <source>
        <strain>CT18</strain>
    </source>
</reference>
<reference key="2">
    <citation type="journal article" date="2003" name="J. Bacteriol.">
        <title>Comparative genomics of Salmonella enterica serovar Typhi strains Ty2 and CT18.</title>
        <authorList>
            <person name="Deng W."/>
            <person name="Liou S.-R."/>
            <person name="Plunkett G. III"/>
            <person name="Mayhew G.F."/>
            <person name="Rose D.J."/>
            <person name="Burland V."/>
            <person name="Kodoyianni V."/>
            <person name="Schwartz D.C."/>
            <person name="Blattner F.R."/>
        </authorList>
    </citation>
    <scope>NUCLEOTIDE SEQUENCE [LARGE SCALE GENOMIC DNA]</scope>
    <source>
        <strain>ATCC 700931 / Ty2</strain>
    </source>
</reference>
<accession>Q8Z7R6</accession>
<accession>Q7C966</accession>
<name>RLMI_SALTI</name>
<evidence type="ECO:0000255" key="1">
    <source>
        <dbReference type="HAMAP-Rule" id="MF_01857"/>
    </source>
</evidence>
<gene>
    <name evidence="1" type="primary">rlmI</name>
    <name type="ordered locus">STY1103</name>
    <name type="ordered locus">t1840</name>
</gene>
<dbReference type="EC" id="2.1.1.191" evidence="1"/>
<dbReference type="EMBL" id="AE014613">
    <property type="protein sequence ID" value="AAO69458.1"/>
    <property type="molecule type" value="Genomic_DNA"/>
</dbReference>
<dbReference type="EMBL" id="AL513382">
    <property type="protein sequence ID" value="CAD08206.1"/>
    <property type="molecule type" value="Genomic_DNA"/>
</dbReference>
<dbReference type="RefSeq" id="NP_455578.1">
    <property type="nucleotide sequence ID" value="NC_003198.1"/>
</dbReference>
<dbReference type="RefSeq" id="WP_000140485.1">
    <property type="nucleotide sequence ID" value="NZ_WSUR01000013.1"/>
</dbReference>
<dbReference type="SMR" id="Q8Z7R6"/>
<dbReference type="STRING" id="220341.gene:17585084"/>
<dbReference type="KEGG" id="stt:t1840"/>
<dbReference type="KEGG" id="sty:STY1103"/>
<dbReference type="PATRIC" id="fig|220341.7.peg.1109"/>
<dbReference type="eggNOG" id="COG1092">
    <property type="taxonomic scope" value="Bacteria"/>
</dbReference>
<dbReference type="HOGENOM" id="CLU_014042_0_0_6"/>
<dbReference type="OMA" id="VMDVFDY"/>
<dbReference type="OrthoDB" id="9805492at2"/>
<dbReference type="Proteomes" id="UP000000541">
    <property type="component" value="Chromosome"/>
</dbReference>
<dbReference type="Proteomes" id="UP000002670">
    <property type="component" value="Chromosome"/>
</dbReference>
<dbReference type="GO" id="GO:0005737">
    <property type="term" value="C:cytoplasm"/>
    <property type="evidence" value="ECO:0007669"/>
    <property type="project" value="UniProtKB-SubCell"/>
</dbReference>
<dbReference type="GO" id="GO:0003723">
    <property type="term" value="F:RNA binding"/>
    <property type="evidence" value="ECO:0007669"/>
    <property type="project" value="UniProtKB-KW"/>
</dbReference>
<dbReference type="GO" id="GO:0016434">
    <property type="term" value="F:rRNA (cytosine) methyltransferase activity"/>
    <property type="evidence" value="ECO:0007669"/>
    <property type="project" value="UniProtKB-UniRule"/>
</dbReference>
<dbReference type="CDD" id="cd02440">
    <property type="entry name" value="AdoMet_MTases"/>
    <property type="match status" value="1"/>
</dbReference>
<dbReference type="CDD" id="cd21153">
    <property type="entry name" value="PUA_RlmI"/>
    <property type="match status" value="1"/>
</dbReference>
<dbReference type="CDD" id="cd11572">
    <property type="entry name" value="RlmI_M_like"/>
    <property type="match status" value="1"/>
</dbReference>
<dbReference type="FunFam" id="3.40.50.150:FF:000044">
    <property type="entry name" value="Ribosomal RNA large subunit methyltransferase I"/>
    <property type="match status" value="1"/>
</dbReference>
<dbReference type="Gene3D" id="2.30.130.10">
    <property type="entry name" value="PUA domain"/>
    <property type="match status" value="1"/>
</dbReference>
<dbReference type="Gene3D" id="3.30.750.80">
    <property type="entry name" value="RNA methyltransferase domain (HRMD) like"/>
    <property type="match status" value="1"/>
</dbReference>
<dbReference type="Gene3D" id="3.40.50.150">
    <property type="entry name" value="Vaccinia Virus protein VP39"/>
    <property type="match status" value="1"/>
</dbReference>
<dbReference type="HAMAP" id="MF_01857">
    <property type="entry name" value="23SrRNA_methyltr_I"/>
    <property type="match status" value="1"/>
</dbReference>
<dbReference type="InterPro" id="IPR002478">
    <property type="entry name" value="PUA"/>
</dbReference>
<dbReference type="InterPro" id="IPR015947">
    <property type="entry name" value="PUA-like_sf"/>
</dbReference>
<dbReference type="InterPro" id="IPR036974">
    <property type="entry name" value="PUA_sf"/>
</dbReference>
<dbReference type="InterPro" id="IPR023542">
    <property type="entry name" value="RLMI"/>
</dbReference>
<dbReference type="InterPro" id="IPR041532">
    <property type="entry name" value="RlmI-like_PUA"/>
</dbReference>
<dbReference type="InterPro" id="IPR019614">
    <property type="entry name" value="SAM-dep_methyl-trfase"/>
</dbReference>
<dbReference type="InterPro" id="IPR029063">
    <property type="entry name" value="SAM-dependent_MTases_sf"/>
</dbReference>
<dbReference type="NCBIfam" id="NF011707">
    <property type="entry name" value="PRK15128.1"/>
    <property type="match status" value="1"/>
</dbReference>
<dbReference type="PANTHER" id="PTHR42873">
    <property type="entry name" value="RIBOSOMAL RNA LARGE SUBUNIT METHYLTRANSFERASE"/>
    <property type="match status" value="1"/>
</dbReference>
<dbReference type="PANTHER" id="PTHR42873:SF1">
    <property type="entry name" value="S-ADENOSYLMETHIONINE-DEPENDENT METHYLTRANSFERASE DOMAIN-CONTAINING PROTEIN"/>
    <property type="match status" value="1"/>
</dbReference>
<dbReference type="Pfam" id="PF10672">
    <property type="entry name" value="Methyltrans_SAM"/>
    <property type="match status" value="1"/>
</dbReference>
<dbReference type="Pfam" id="PF17785">
    <property type="entry name" value="PUA_3"/>
    <property type="match status" value="1"/>
</dbReference>
<dbReference type="SMART" id="SM00359">
    <property type="entry name" value="PUA"/>
    <property type="match status" value="1"/>
</dbReference>
<dbReference type="SUPFAM" id="SSF88697">
    <property type="entry name" value="PUA domain-like"/>
    <property type="match status" value="1"/>
</dbReference>
<dbReference type="SUPFAM" id="SSF53335">
    <property type="entry name" value="S-adenosyl-L-methionine-dependent methyltransferases"/>
    <property type="match status" value="1"/>
</dbReference>
<dbReference type="PROSITE" id="PS50890">
    <property type="entry name" value="PUA"/>
    <property type="match status" value="1"/>
</dbReference>
<comment type="function">
    <text evidence="1">Specifically methylates the cytosine at position 1962 (m5C1962) of 23S rRNA.</text>
</comment>
<comment type="catalytic activity">
    <reaction evidence="1">
        <text>cytidine(1962) in 23S rRNA + S-adenosyl-L-methionine = 5-methylcytidine(1962) in 23S rRNA + S-adenosyl-L-homocysteine + H(+)</text>
        <dbReference type="Rhea" id="RHEA:42912"/>
        <dbReference type="Rhea" id="RHEA-COMP:10382"/>
        <dbReference type="Rhea" id="RHEA-COMP:10386"/>
        <dbReference type="ChEBI" id="CHEBI:15378"/>
        <dbReference type="ChEBI" id="CHEBI:57856"/>
        <dbReference type="ChEBI" id="CHEBI:59789"/>
        <dbReference type="ChEBI" id="CHEBI:74483"/>
        <dbReference type="ChEBI" id="CHEBI:82748"/>
        <dbReference type="EC" id="2.1.1.191"/>
    </reaction>
</comment>
<comment type="subcellular location">
    <subcellularLocation>
        <location evidence="1">Cytoplasm</location>
    </subcellularLocation>
</comment>
<comment type="similarity">
    <text evidence="1">Belongs to the methyltransferase superfamily. RlmI family.</text>
</comment>
<keyword id="KW-0963">Cytoplasm</keyword>
<keyword id="KW-0489">Methyltransferase</keyword>
<keyword id="KW-0694">RNA-binding</keyword>
<keyword id="KW-0698">rRNA processing</keyword>
<keyword id="KW-0949">S-adenosyl-L-methionine</keyword>
<keyword id="KW-0808">Transferase</keyword>
<feature type="chain" id="PRO_0000366251" description="Ribosomal RNA large subunit methyltransferase I">
    <location>
        <begin position="1"/>
        <end position="403"/>
    </location>
</feature>
<feature type="domain" description="PUA" evidence="1">
    <location>
        <begin position="9"/>
        <end position="88"/>
    </location>
</feature>
<organism>
    <name type="scientific">Salmonella typhi</name>
    <dbReference type="NCBI Taxonomy" id="90370"/>
    <lineage>
        <taxon>Bacteria</taxon>
        <taxon>Pseudomonadati</taxon>
        <taxon>Pseudomonadota</taxon>
        <taxon>Gammaproteobacteria</taxon>
        <taxon>Enterobacterales</taxon>
        <taxon>Enterobacteriaceae</taxon>
        <taxon>Salmonella</taxon>
    </lineage>
</organism>
<sequence>MTESTFPQYPRLVLSKGREKSLLRRHPWVFSGAVSRLEGKANLGETIDIVDHQGKWLARGAWSPASQIRARVWTFDKTESIDIAFFTRRLRQAQQWRDWLAKKDGLDSYRLIAGESDGLPGVTIDRFGHFLVLQLLSAGAEYQRAALISALQTCYPDCAIYDRSDVAVRKKEGMALTQGPVTGELPPALLPIEEHGMKLLVDIQGGHKTGYYLDQRDSRLVTRRYVENQRVLNCFSYTGGFAVSALMGGCRQVVSVDTSQDALDIARQNVELNQLDLSKAEFVRDDVFKLLRAYREHGEKFDVIIMDPPKFVENKSQLMGACRGYKDINMLAIQLLNPGGILLTFSCSGLMTSDLFQKIIADAAIDAGRDVQFIEQFRQAADHPVIATYPEGLYLKGFACRVM</sequence>
<proteinExistence type="inferred from homology"/>